<dbReference type="EMBL" id="AE017197">
    <property type="protein sequence ID" value="AAU03766.1"/>
    <property type="molecule type" value="Genomic_DNA"/>
</dbReference>
<dbReference type="RefSeq" id="WP_011190751.1">
    <property type="nucleotide sequence ID" value="NC_006142.1"/>
</dbReference>
<dbReference type="KEGG" id="rty:RT0286"/>
<dbReference type="HOGENOM" id="CLU_946219_0_0_5"/>
<dbReference type="OrthoDB" id="7161142at2"/>
<dbReference type="Proteomes" id="UP000000604">
    <property type="component" value="Chromosome"/>
</dbReference>
<dbReference type="InterPro" id="IPR022565">
    <property type="entry name" value="DUF2608"/>
</dbReference>
<dbReference type="Pfam" id="PF11019">
    <property type="entry name" value="DUF2608"/>
    <property type="match status" value="1"/>
</dbReference>
<keyword id="KW-0732">Signal</keyword>
<reference key="1">
    <citation type="journal article" date="2004" name="J. Bacteriol.">
        <title>Complete genome sequence of Rickettsia typhi and comparison with sequences of other Rickettsiae.</title>
        <authorList>
            <person name="McLeod M.P."/>
            <person name="Qin X."/>
            <person name="Karpathy S.E."/>
            <person name="Gioia J."/>
            <person name="Highlander S.K."/>
            <person name="Fox G.E."/>
            <person name="McNeill T.Z."/>
            <person name="Jiang H."/>
            <person name="Muzny D."/>
            <person name="Jacob L.S."/>
            <person name="Hawes A.C."/>
            <person name="Sodergren E."/>
            <person name="Gill R."/>
            <person name="Hume J."/>
            <person name="Morgan M."/>
            <person name="Fan G."/>
            <person name="Amin A.G."/>
            <person name="Gibbs R.A."/>
            <person name="Hong C."/>
            <person name="Yu X.-J."/>
            <person name="Walker D.H."/>
            <person name="Weinstock G.M."/>
        </authorList>
    </citation>
    <scope>NUCLEOTIDE SEQUENCE [LARGE SCALE GENOMIC DNA]</scope>
    <source>
        <strain>ATCC VR-144 / Wilmington</strain>
    </source>
</reference>
<proteinExistence type="inferred from homology"/>
<name>Y286_RICTY</name>
<organism>
    <name type="scientific">Rickettsia typhi (strain ATCC VR-144 / Wilmington)</name>
    <dbReference type="NCBI Taxonomy" id="257363"/>
    <lineage>
        <taxon>Bacteria</taxon>
        <taxon>Pseudomonadati</taxon>
        <taxon>Pseudomonadota</taxon>
        <taxon>Alphaproteobacteria</taxon>
        <taxon>Rickettsiales</taxon>
        <taxon>Rickettsiaceae</taxon>
        <taxon>Rickettsieae</taxon>
        <taxon>Rickettsia</taxon>
        <taxon>typhus group</taxon>
    </lineage>
</organism>
<gene>
    <name type="ordered locus">RT0286</name>
</gene>
<feature type="signal peptide" evidence="1">
    <location>
        <begin position="1"/>
        <end position="19"/>
    </location>
</feature>
<feature type="chain" id="PRO_0000268850" description="Uncharacterized protein RT0286">
    <location>
        <begin position="20"/>
        <end position="295"/>
    </location>
</feature>
<feature type="region of interest" description="Disordered" evidence="2">
    <location>
        <begin position="274"/>
        <end position="295"/>
    </location>
</feature>
<feature type="compositionally biased region" description="Low complexity" evidence="2">
    <location>
        <begin position="276"/>
        <end position="288"/>
    </location>
</feature>
<evidence type="ECO:0000255" key="1"/>
<evidence type="ECO:0000256" key="2">
    <source>
        <dbReference type="SAM" id="MobiDB-lite"/>
    </source>
</evidence>
<accession>Q68X76</accession>
<sequence length="295" mass="34469">MFRKFLFIPLLIVTSLVKAEIIEVDSLSKITQDFKVNYNKNYLPQDLLVVTVLDKFLFKPFGIPIGEYIDQRRYLELAPLFSQINKNSKIIYIAQLILTNDSYKKELQESDFPSFVNEISNSQIPIIAVNNGFTGNFNNIPKFEIWFADYLKKNFYIDFSKSFPNNNYIIFNNLDSFANTYPVFYKGILTSNNISVAQVILNFLIQINFIPKCFILISSNRELIRSMEFQLNNHSSNILFIGYHYNNKTISAHKDIVYYTKMINDLIPQINKLKRNNPPLKNNNAKSKNSYETHK</sequence>
<protein>
    <recommendedName>
        <fullName>Uncharacterized protein RT0286</fullName>
    </recommendedName>
</protein>